<protein>
    <recommendedName>
        <fullName evidence="1">ATP synthase epsilon chain</fullName>
    </recommendedName>
    <alternativeName>
        <fullName evidence="1">ATP synthase F1 sector epsilon subunit</fullName>
    </alternativeName>
    <alternativeName>
        <fullName evidence="1">F-ATPase epsilon subunit</fullName>
    </alternativeName>
</protein>
<reference key="1">
    <citation type="journal article" date="2008" name="Genome Biol.">
        <title>The complete genome, comparative and functional analysis of Stenotrophomonas maltophilia reveals an organism heavily shielded by drug resistance determinants.</title>
        <authorList>
            <person name="Crossman L.C."/>
            <person name="Gould V.C."/>
            <person name="Dow J.M."/>
            <person name="Vernikos G.S."/>
            <person name="Okazaki A."/>
            <person name="Sebaihia M."/>
            <person name="Saunders D."/>
            <person name="Arrowsmith C."/>
            <person name="Carver T."/>
            <person name="Peters N."/>
            <person name="Adlem E."/>
            <person name="Kerhornou A."/>
            <person name="Lord A."/>
            <person name="Murphy L."/>
            <person name="Seeger K."/>
            <person name="Squares R."/>
            <person name="Rutter S."/>
            <person name="Quail M.A."/>
            <person name="Rajandream M.A."/>
            <person name="Harris D."/>
            <person name="Churcher C."/>
            <person name="Bentley S.D."/>
            <person name="Parkhill J."/>
            <person name="Thomson N.R."/>
            <person name="Avison M.B."/>
        </authorList>
    </citation>
    <scope>NUCLEOTIDE SEQUENCE [LARGE SCALE GENOMIC DNA]</scope>
    <source>
        <strain>K279a</strain>
    </source>
</reference>
<proteinExistence type="inferred from homology"/>
<dbReference type="EMBL" id="AM743169">
    <property type="protein sequence ID" value="CAQ47501.1"/>
    <property type="molecule type" value="Genomic_DNA"/>
</dbReference>
<dbReference type="RefSeq" id="WP_005411127.1">
    <property type="nucleotide sequence ID" value="NC_010943.1"/>
</dbReference>
<dbReference type="SMR" id="B2FHY7"/>
<dbReference type="EnsemblBacteria" id="CAQ47501">
    <property type="protein sequence ID" value="CAQ47501"/>
    <property type="gene ID" value="Smlt4110"/>
</dbReference>
<dbReference type="KEGG" id="sml:Smlt4110"/>
<dbReference type="eggNOG" id="COG0355">
    <property type="taxonomic scope" value="Bacteria"/>
</dbReference>
<dbReference type="HOGENOM" id="CLU_084338_2_0_6"/>
<dbReference type="Proteomes" id="UP000008840">
    <property type="component" value="Chromosome"/>
</dbReference>
<dbReference type="GO" id="GO:0005886">
    <property type="term" value="C:plasma membrane"/>
    <property type="evidence" value="ECO:0007669"/>
    <property type="project" value="UniProtKB-SubCell"/>
</dbReference>
<dbReference type="GO" id="GO:0045259">
    <property type="term" value="C:proton-transporting ATP synthase complex"/>
    <property type="evidence" value="ECO:0007669"/>
    <property type="project" value="UniProtKB-KW"/>
</dbReference>
<dbReference type="GO" id="GO:0005524">
    <property type="term" value="F:ATP binding"/>
    <property type="evidence" value="ECO:0007669"/>
    <property type="project" value="UniProtKB-UniRule"/>
</dbReference>
<dbReference type="GO" id="GO:0046933">
    <property type="term" value="F:proton-transporting ATP synthase activity, rotational mechanism"/>
    <property type="evidence" value="ECO:0007669"/>
    <property type="project" value="UniProtKB-UniRule"/>
</dbReference>
<dbReference type="CDD" id="cd12152">
    <property type="entry name" value="F1-ATPase_delta"/>
    <property type="match status" value="1"/>
</dbReference>
<dbReference type="FunFam" id="2.60.15.10:FF:000001">
    <property type="entry name" value="ATP synthase epsilon chain"/>
    <property type="match status" value="1"/>
</dbReference>
<dbReference type="Gene3D" id="1.20.5.440">
    <property type="entry name" value="ATP synthase delta/epsilon subunit, C-terminal domain"/>
    <property type="match status" value="1"/>
</dbReference>
<dbReference type="Gene3D" id="2.60.15.10">
    <property type="entry name" value="F0F1 ATP synthase delta/epsilon subunit, N-terminal"/>
    <property type="match status" value="1"/>
</dbReference>
<dbReference type="HAMAP" id="MF_00530">
    <property type="entry name" value="ATP_synth_epsil_bac"/>
    <property type="match status" value="1"/>
</dbReference>
<dbReference type="InterPro" id="IPR036794">
    <property type="entry name" value="ATP_F1_dsu/esu_C_sf"/>
</dbReference>
<dbReference type="InterPro" id="IPR001469">
    <property type="entry name" value="ATP_synth_F1_dsu/esu"/>
</dbReference>
<dbReference type="InterPro" id="IPR020546">
    <property type="entry name" value="ATP_synth_F1_dsu/esu_N"/>
</dbReference>
<dbReference type="InterPro" id="IPR020547">
    <property type="entry name" value="ATP_synth_F1_esu_C"/>
</dbReference>
<dbReference type="InterPro" id="IPR036771">
    <property type="entry name" value="ATPsynth_dsu/esu_N"/>
</dbReference>
<dbReference type="NCBIfam" id="TIGR01216">
    <property type="entry name" value="ATP_synt_epsi"/>
    <property type="match status" value="1"/>
</dbReference>
<dbReference type="NCBIfam" id="NF001847">
    <property type="entry name" value="PRK00571.1-4"/>
    <property type="match status" value="1"/>
</dbReference>
<dbReference type="PANTHER" id="PTHR13822">
    <property type="entry name" value="ATP SYNTHASE DELTA/EPSILON CHAIN"/>
    <property type="match status" value="1"/>
</dbReference>
<dbReference type="PANTHER" id="PTHR13822:SF10">
    <property type="entry name" value="ATP SYNTHASE EPSILON CHAIN, CHLOROPLASTIC"/>
    <property type="match status" value="1"/>
</dbReference>
<dbReference type="Pfam" id="PF00401">
    <property type="entry name" value="ATP-synt_DE"/>
    <property type="match status" value="1"/>
</dbReference>
<dbReference type="Pfam" id="PF02823">
    <property type="entry name" value="ATP-synt_DE_N"/>
    <property type="match status" value="1"/>
</dbReference>
<dbReference type="SUPFAM" id="SSF46604">
    <property type="entry name" value="Epsilon subunit of F1F0-ATP synthase C-terminal domain"/>
    <property type="match status" value="1"/>
</dbReference>
<dbReference type="SUPFAM" id="SSF51344">
    <property type="entry name" value="Epsilon subunit of F1F0-ATP synthase N-terminal domain"/>
    <property type="match status" value="1"/>
</dbReference>
<gene>
    <name evidence="1" type="primary">atpC</name>
    <name type="ordered locus">Smlt4110</name>
</gene>
<organism>
    <name type="scientific">Stenotrophomonas maltophilia (strain K279a)</name>
    <dbReference type="NCBI Taxonomy" id="522373"/>
    <lineage>
        <taxon>Bacteria</taxon>
        <taxon>Pseudomonadati</taxon>
        <taxon>Pseudomonadota</taxon>
        <taxon>Gammaproteobacteria</taxon>
        <taxon>Lysobacterales</taxon>
        <taxon>Lysobacteraceae</taxon>
        <taxon>Stenotrophomonas</taxon>
        <taxon>Stenotrophomonas maltophilia group</taxon>
    </lineage>
</organism>
<name>ATPE_STRMK</name>
<feature type="chain" id="PRO_1000127896" description="ATP synthase epsilon chain">
    <location>
        <begin position="1"/>
        <end position="140"/>
    </location>
</feature>
<comment type="function">
    <text evidence="1">Produces ATP from ADP in the presence of a proton gradient across the membrane.</text>
</comment>
<comment type="subunit">
    <text evidence="1">F-type ATPases have 2 components, CF(1) - the catalytic core - and CF(0) - the membrane proton channel. CF(1) has five subunits: alpha(3), beta(3), gamma(1), delta(1), epsilon(1). CF(0) has three main subunits: a, b and c.</text>
</comment>
<comment type="subcellular location">
    <subcellularLocation>
        <location evidence="1">Cell membrane</location>
        <topology evidence="1">Peripheral membrane protein</topology>
    </subcellularLocation>
</comment>
<comment type="similarity">
    <text evidence="1">Belongs to the ATPase epsilon chain family.</text>
</comment>
<accession>B2FHY7</accession>
<sequence>MSTIRCDIVSAEQEIFRGEATLVVATGELGELGIAPKHAPLITRLKPGKVVVTTPNGEQLDFAISGGILEVQPQVVTVLADTAIRAQDIDEASVRKAKEEAERILANRGEAMEVAEAQQKLAEAVVQLQALERLRKTLKH</sequence>
<keyword id="KW-0066">ATP synthesis</keyword>
<keyword id="KW-1003">Cell membrane</keyword>
<keyword id="KW-0139">CF(1)</keyword>
<keyword id="KW-0375">Hydrogen ion transport</keyword>
<keyword id="KW-0406">Ion transport</keyword>
<keyword id="KW-0472">Membrane</keyword>
<keyword id="KW-1185">Reference proteome</keyword>
<keyword id="KW-0813">Transport</keyword>
<evidence type="ECO:0000255" key="1">
    <source>
        <dbReference type="HAMAP-Rule" id="MF_00530"/>
    </source>
</evidence>